<organism>
    <name type="scientific">Bacillus cereus (strain ATCC 10987 / NRS 248)</name>
    <dbReference type="NCBI Taxonomy" id="222523"/>
    <lineage>
        <taxon>Bacteria</taxon>
        <taxon>Bacillati</taxon>
        <taxon>Bacillota</taxon>
        <taxon>Bacilli</taxon>
        <taxon>Bacillales</taxon>
        <taxon>Bacillaceae</taxon>
        <taxon>Bacillus</taxon>
        <taxon>Bacillus cereus group</taxon>
    </lineage>
</organism>
<keyword id="KW-0963">Cytoplasm</keyword>
<keyword id="KW-0328">Glycosyltransferase</keyword>
<keyword id="KW-0660">Purine salvage</keyword>
<keyword id="KW-0808">Transferase</keyword>
<proteinExistence type="inferred from homology"/>
<protein>
    <recommendedName>
        <fullName evidence="1">Xanthine phosphoribosyltransferase</fullName>
        <shortName evidence="1">XPRTase</shortName>
        <ecNumber evidence="1">2.4.2.22</ecNumber>
    </recommendedName>
</protein>
<name>XPT_BACC1</name>
<sequence length="197" mass="21600">MKVLQEKILNEGKVLSGDVLKVDAFLNHQIDPVLMQEIGKEFAKRFKEENITKIVTIESSGIAPAVMAALELGVKVIFARKRKSLTLQDNMYVANVYSFTKQETNEISLSRNHIDESDRVLIIDDFLANGQAALGLMSLVEQAGASIAGIGIVIEKAFQDGGKKLREQGVRVESLAEIASLDNGTVTFVQHETAEVK</sequence>
<comment type="function">
    <text evidence="1">Converts the preformed base xanthine, a product of nucleic acid breakdown, to xanthosine 5'-monophosphate (XMP), so it can be reused for RNA or DNA synthesis.</text>
</comment>
<comment type="catalytic activity">
    <reaction evidence="1">
        <text>XMP + diphosphate = xanthine + 5-phospho-alpha-D-ribose 1-diphosphate</text>
        <dbReference type="Rhea" id="RHEA:10800"/>
        <dbReference type="ChEBI" id="CHEBI:17712"/>
        <dbReference type="ChEBI" id="CHEBI:33019"/>
        <dbReference type="ChEBI" id="CHEBI:57464"/>
        <dbReference type="ChEBI" id="CHEBI:58017"/>
        <dbReference type="EC" id="2.4.2.22"/>
    </reaction>
</comment>
<comment type="pathway">
    <text evidence="1">Purine metabolism; XMP biosynthesis via salvage pathway; XMP from xanthine: step 1/1.</text>
</comment>
<comment type="subunit">
    <text evidence="1">Homodimer.</text>
</comment>
<comment type="subcellular location">
    <subcellularLocation>
        <location evidence="1">Cytoplasm</location>
    </subcellularLocation>
</comment>
<comment type="similarity">
    <text evidence="1">Belongs to the purine/pyrimidine phosphoribosyltransferase family. Xpt subfamily.</text>
</comment>
<gene>
    <name evidence="1" type="primary">xpt</name>
    <name type="ordered locus">BCE_1697</name>
</gene>
<evidence type="ECO:0000255" key="1">
    <source>
        <dbReference type="HAMAP-Rule" id="MF_01184"/>
    </source>
</evidence>
<feature type="chain" id="PRO_0000339660" description="Xanthine phosphoribosyltransferase">
    <location>
        <begin position="1"/>
        <end position="197"/>
    </location>
</feature>
<feature type="binding site" evidence="1">
    <location>
        <position position="20"/>
    </location>
    <ligand>
        <name>xanthine</name>
        <dbReference type="ChEBI" id="CHEBI:17712"/>
    </ligand>
</feature>
<feature type="binding site" evidence="1">
    <location>
        <position position="27"/>
    </location>
    <ligand>
        <name>xanthine</name>
        <dbReference type="ChEBI" id="CHEBI:17712"/>
    </ligand>
</feature>
<feature type="binding site" evidence="1">
    <location>
        <begin position="128"/>
        <end position="132"/>
    </location>
    <ligand>
        <name>5-phospho-alpha-D-ribose 1-diphosphate</name>
        <dbReference type="ChEBI" id="CHEBI:58017"/>
    </ligand>
</feature>
<feature type="binding site" evidence="1">
    <location>
        <position position="156"/>
    </location>
    <ligand>
        <name>xanthine</name>
        <dbReference type="ChEBI" id="CHEBI:17712"/>
    </ligand>
</feature>
<reference key="1">
    <citation type="journal article" date="2004" name="Nucleic Acids Res.">
        <title>The genome sequence of Bacillus cereus ATCC 10987 reveals metabolic adaptations and a large plasmid related to Bacillus anthracis pXO1.</title>
        <authorList>
            <person name="Rasko D.A."/>
            <person name="Ravel J."/>
            <person name="Oekstad O.A."/>
            <person name="Helgason E."/>
            <person name="Cer R.Z."/>
            <person name="Jiang L."/>
            <person name="Shores K.A."/>
            <person name="Fouts D.E."/>
            <person name="Tourasse N.J."/>
            <person name="Angiuoli S.V."/>
            <person name="Kolonay J.F."/>
            <person name="Nelson W.C."/>
            <person name="Kolstoe A.-B."/>
            <person name="Fraser C.M."/>
            <person name="Read T.D."/>
        </authorList>
    </citation>
    <scope>NUCLEOTIDE SEQUENCE [LARGE SCALE GENOMIC DNA]</scope>
    <source>
        <strain>ATCC 10987 / NRS 248</strain>
    </source>
</reference>
<accession>Q73AS5</accession>
<dbReference type="EC" id="2.4.2.22" evidence="1"/>
<dbReference type="EMBL" id="AE017194">
    <property type="protein sequence ID" value="AAS40626.1"/>
    <property type="molecule type" value="Genomic_DNA"/>
</dbReference>
<dbReference type="SMR" id="Q73AS5"/>
<dbReference type="KEGG" id="bca:BCE_1697"/>
<dbReference type="HOGENOM" id="CLU_099015_0_0_9"/>
<dbReference type="UniPathway" id="UPA00602">
    <property type="reaction ID" value="UER00658"/>
</dbReference>
<dbReference type="Proteomes" id="UP000002527">
    <property type="component" value="Chromosome"/>
</dbReference>
<dbReference type="GO" id="GO:0005737">
    <property type="term" value="C:cytoplasm"/>
    <property type="evidence" value="ECO:0007669"/>
    <property type="project" value="UniProtKB-SubCell"/>
</dbReference>
<dbReference type="GO" id="GO:0000310">
    <property type="term" value="F:xanthine phosphoribosyltransferase activity"/>
    <property type="evidence" value="ECO:0007669"/>
    <property type="project" value="UniProtKB-UniRule"/>
</dbReference>
<dbReference type="GO" id="GO:0006166">
    <property type="term" value="P:purine ribonucleoside salvage"/>
    <property type="evidence" value="ECO:0007669"/>
    <property type="project" value="UniProtKB-KW"/>
</dbReference>
<dbReference type="GO" id="GO:0046110">
    <property type="term" value="P:xanthine metabolic process"/>
    <property type="evidence" value="ECO:0007669"/>
    <property type="project" value="InterPro"/>
</dbReference>
<dbReference type="GO" id="GO:0032265">
    <property type="term" value="P:XMP salvage"/>
    <property type="evidence" value="ECO:0007669"/>
    <property type="project" value="UniProtKB-UniRule"/>
</dbReference>
<dbReference type="CDD" id="cd06223">
    <property type="entry name" value="PRTases_typeI"/>
    <property type="match status" value="1"/>
</dbReference>
<dbReference type="Gene3D" id="3.40.50.2020">
    <property type="match status" value="1"/>
</dbReference>
<dbReference type="HAMAP" id="MF_01184">
    <property type="entry name" value="XPRTase"/>
    <property type="match status" value="1"/>
</dbReference>
<dbReference type="InterPro" id="IPR000836">
    <property type="entry name" value="PRibTrfase_dom"/>
</dbReference>
<dbReference type="InterPro" id="IPR029057">
    <property type="entry name" value="PRTase-like"/>
</dbReference>
<dbReference type="InterPro" id="IPR050118">
    <property type="entry name" value="Pur/Pyrimidine_PRTase"/>
</dbReference>
<dbReference type="InterPro" id="IPR010079">
    <property type="entry name" value="Xanthine_PRibTrfase"/>
</dbReference>
<dbReference type="NCBIfam" id="NF006671">
    <property type="entry name" value="PRK09219.1"/>
    <property type="match status" value="1"/>
</dbReference>
<dbReference type="NCBIfam" id="TIGR01744">
    <property type="entry name" value="XPRTase"/>
    <property type="match status" value="1"/>
</dbReference>
<dbReference type="PANTHER" id="PTHR43864">
    <property type="entry name" value="HYPOXANTHINE/GUANINE PHOSPHORIBOSYLTRANSFERASE"/>
    <property type="match status" value="1"/>
</dbReference>
<dbReference type="PANTHER" id="PTHR43864:SF1">
    <property type="entry name" value="XANTHINE PHOSPHORIBOSYLTRANSFERASE"/>
    <property type="match status" value="1"/>
</dbReference>
<dbReference type="Pfam" id="PF00156">
    <property type="entry name" value="Pribosyltran"/>
    <property type="match status" value="1"/>
</dbReference>
<dbReference type="SUPFAM" id="SSF53271">
    <property type="entry name" value="PRTase-like"/>
    <property type="match status" value="1"/>
</dbReference>